<accession>K8ERR8</accession>
<accession>D7SFM3</accession>
<accession>G5EBH5</accession>
<accession>G5EGP0</accession>
<accession>G5EGU3</accession>
<accession>K8ES81</accession>
<accession>K8ESF3</accession>
<accession>K8F7U3</accession>
<accession>L8E6K3</accession>
<accession>Q21789</accession>
<sequence length="1585" mass="178281">MGKKRKPSPERSSDEDEVSTPSPKDRTARPTAAARRENVALSQAVALSLEDASNFCSLAFSLERIKREPVDTDYDDPNQPGPSSVPVSARTDHVLPIRFKIKAEPQEYDSDEYGKDHGAVQIANKEVPAISPIEEVSQKRRGRPRKTDAAQHLFFPHVSIKQEPDDGFINFHESRCVGIAQDPEMQHLHDVNESHSSEIAIFRETKKITERKKKKTEAEKLWDNMSLTEKEVFQSHTRRRRTTRLPIIQNFEETEEGCIVEVPIPLIDLDNDAVESVTGPQHENVTVSENVLSTESTDQEVTETKRLHDSSRDFNPPRIQDTPSTVIRPEGDQKDPMSSTSSKRRNTNNSRCASLLSNPHSTPVTRLMRGILDSENSDNDEMLSNDQSEIAKRPRTPRPRYSPEAQRRTNSRLSALTIDTNRSNDLNVDGSAPSSSSAASCGLSTPDPDRTSQQRRKGNQSAARSRKIKTPSPPLSQEDEPMELDSDDDPVNELDNLPIVIDDPSYVLTKEHKEIFEQVKKSVSDRNEFSPAQISEIYRSSKGEQARLPERIHFGAFIMKTWYGSPFPAEFINVKKLFICEFCFFYARSDEIMQNHAKKCMLRAPPGLEIYRKGDISVFEVDGRLQKEYCQTLCLVSRMFLESKTVFYDTEPFFFYIVTINDDIGCHFAGYFSKEKYEPDVNNLSCIMTLPCYQEMGLGRFLIDISYALSRKEKWFGGPEQPLSELGRKAYGGYWRTTIASCLGRLKDELEFGSGISIKMIADDTGVNCHDILEVVCSLGWAKPVDPDEKNHYKLEWDVDWDMVSIILRESEASKETKVQYDPECLDWVPRKMRPSMDGYHELSKEEIEQDEQRRKSIQKTPVHVSMEKATPTSTTSLPVGSVKKELRSRGHNRSVGRNLKHEVNRKVKVPEWAAARDLTDEEITVEENKKQQKQNRKIFTRCADSVLDKSNIREETPEDDEPGPSTKPSGKRQRGNKCNNTESEPNPSGRKTSATSSGRGKYRNRRTDGTEEEEEDDDPTDSEPLTTDDEKPFETSVNKEKNEKSRRGKKVSKKRRSVAGKKFPPNFGVRDRDEPKKAENSEDGEGLESKPGPSTEMILVEKVEEEEAKVTVSDINMQASESKIEGIEQTSEVDIPKSDEDHQSTEAYDRVEDEVPITDYNIPTPDSYHSSPPHSPTPSPQPQLMQAQQNIYQDNDCHFAENDSKPPHLVSEVDDPAAPQPTVTLQSGPSDAPPLSHNSVDGYSTGDDDAPPNLSPQIGKSENNEEEMPLIAPIVQHNGITHHEESTAQHYHDSMNAGPSTSSHVTPQMSMINTTPQQPPFSHPNSQQQATPGSGGVPSCGPAYTHHTPEQQSQQFMSPPMAGMPASVASNHSIHNSNSIEMVGGPASLQHTPQQYEMGHSMAQMSQESAIGGINTVPSIEQQNQLMLQHHQFSSPPAAPPPSQQQQVVQPPIPPAPTTANGRRRSESAATQRTKARQQHQHQQQQPQQPQQRIAAPGVPQGVHPQMQFPMNAMNMMPAYPPFYPYTNYPNIWQPPYQNYPYNQVDYQQPWLYNNGHIPHQTNGTATNQFHPGHMGYFPNNNGR</sequence>
<keyword id="KW-0007">Acetylation</keyword>
<keyword id="KW-0025">Alternative splicing</keyword>
<keyword id="KW-0479">Metal-binding</keyword>
<keyword id="KW-1185">Reference proteome</keyword>
<keyword id="KW-0808">Transferase</keyword>
<keyword id="KW-0862">Zinc</keyword>
<keyword id="KW-0863">Zinc-finger</keyword>
<dbReference type="EC" id="2.3.1.48" evidence="2"/>
<dbReference type="EMBL" id="BX284605">
    <property type="protein sequence ID" value="CAA96668.3"/>
    <property type="molecule type" value="Genomic_DNA"/>
</dbReference>
<dbReference type="EMBL" id="BX284605">
    <property type="protein sequence ID" value="CBM41216.2"/>
    <property type="molecule type" value="Genomic_DNA"/>
</dbReference>
<dbReference type="EMBL" id="BX284605">
    <property type="protein sequence ID" value="CBM41217.2"/>
    <property type="molecule type" value="Genomic_DNA"/>
</dbReference>
<dbReference type="EMBL" id="BX284605">
    <property type="protein sequence ID" value="CBM41218.2"/>
    <property type="molecule type" value="Genomic_DNA"/>
</dbReference>
<dbReference type="EMBL" id="BX284605">
    <property type="protein sequence ID" value="CCA65604.1"/>
    <property type="molecule type" value="Genomic_DNA"/>
</dbReference>
<dbReference type="EMBL" id="BX284605">
    <property type="protein sequence ID" value="CCO25615.1"/>
    <property type="molecule type" value="Genomic_DNA"/>
</dbReference>
<dbReference type="EMBL" id="BX284605">
    <property type="protein sequence ID" value="CCO25616.1"/>
    <property type="molecule type" value="Genomic_DNA"/>
</dbReference>
<dbReference type="EMBL" id="BX284605">
    <property type="protein sequence ID" value="CCO25617.1"/>
    <property type="molecule type" value="Genomic_DNA"/>
</dbReference>
<dbReference type="EMBL" id="BX284605">
    <property type="protein sequence ID" value="CCO25618.1"/>
    <property type="molecule type" value="Genomic_DNA"/>
</dbReference>
<dbReference type="EMBL" id="BX284605">
    <property type="protein sequence ID" value="CCQ25674.1"/>
    <property type="molecule type" value="Genomic_DNA"/>
</dbReference>
<dbReference type="PIR" id="T24008">
    <property type="entry name" value="T24008"/>
</dbReference>
<dbReference type="RefSeq" id="NP_001256145.1">
    <molecule id="K8ERR8-4"/>
    <property type="nucleotide sequence ID" value="NM_001269216.3"/>
</dbReference>
<dbReference type="RefSeq" id="NP_001256146.1">
    <molecule id="K8ERR8-5"/>
    <property type="nucleotide sequence ID" value="NM_001269217.3"/>
</dbReference>
<dbReference type="RefSeq" id="NP_001256147.1">
    <molecule id="K8ERR8-6"/>
    <property type="nucleotide sequence ID" value="NM_001269218.3"/>
</dbReference>
<dbReference type="RefSeq" id="NP_001256148.1">
    <property type="nucleotide sequence ID" value="NM_001269219.1"/>
</dbReference>
<dbReference type="RefSeq" id="NP_001256149.1">
    <property type="nucleotide sequence ID" value="NM_001269220.1"/>
</dbReference>
<dbReference type="RefSeq" id="NP_001263847.1">
    <molecule id="K8ERR8-7"/>
    <property type="nucleotide sequence ID" value="NM_001276918.3"/>
</dbReference>
<dbReference type="RefSeq" id="NP_001263848.1">
    <molecule id="K8ERR8-8"/>
    <property type="nucleotide sequence ID" value="NM_001276919.3"/>
</dbReference>
<dbReference type="RefSeq" id="NP_001263849.1">
    <molecule id="K8ERR8-1"/>
    <property type="nucleotide sequence ID" value="NM_001276920.4"/>
</dbReference>
<dbReference type="RefSeq" id="NP_001263850.1">
    <property type="nucleotide sequence ID" value="NM_001276921.1"/>
</dbReference>
<dbReference type="RefSeq" id="NP_001263851.1">
    <property type="nucleotide sequence ID" value="NM_001276922.1"/>
</dbReference>
<dbReference type="RefSeq" id="NP_001359576.1">
    <molecule id="K8ERR8-3"/>
    <property type="nucleotide sequence ID" value="NM_001373082.2"/>
</dbReference>
<dbReference type="RefSeq" id="NP_001360180.1">
    <molecule id="K8ERR8-9"/>
    <property type="nucleotide sequence ID" value="NM_001373081.2"/>
</dbReference>
<dbReference type="RefSeq" id="NP_001368168.1">
    <molecule id="K8ERR8-10"/>
    <property type="nucleotide sequence ID" value="NM_001380733.2"/>
</dbReference>
<dbReference type="RefSeq" id="NP_001379520.1">
    <molecule id="K8ERR8-2"/>
    <property type="nucleotide sequence ID" value="NM_001392586.1"/>
</dbReference>
<dbReference type="SMR" id="K8ERR8"/>
<dbReference type="FunCoup" id="K8ERR8">
    <property type="interactions" value="13"/>
</dbReference>
<dbReference type="STRING" id="6239.R07B5.9h.1"/>
<dbReference type="PaxDb" id="6239-R07B5.9h"/>
<dbReference type="EnsemblMetazoa" id="R07B5.9a.1">
    <molecule id="K8ERR8-2"/>
    <property type="protein sequence ID" value="R07B5.9a.1"/>
    <property type="gene ID" value="WBGene00045419"/>
</dbReference>
<dbReference type="EnsemblMetazoa" id="R07B5.9a.2">
    <molecule id="K8ERR8-2"/>
    <property type="protein sequence ID" value="R07B5.9a.2"/>
    <property type="gene ID" value="WBGene00045419"/>
</dbReference>
<dbReference type="EnsemblMetazoa" id="R07B5.9b.1">
    <molecule id="K8ERR8-3"/>
    <property type="protein sequence ID" value="R07B5.9b.1"/>
    <property type="gene ID" value="WBGene00045419"/>
</dbReference>
<dbReference type="EnsemblMetazoa" id="R07B5.9b.2">
    <molecule id="K8ERR8-3"/>
    <property type="protein sequence ID" value="R07B5.9b.2"/>
    <property type="gene ID" value="WBGene00045419"/>
</dbReference>
<dbReference type="EnsemblMetazoa" id="R07B5.9c.1">
    <molecule id="K8ERR8-4"/>
    <property type="protein sequence ID" value="R07B5.9c.1"/>
    <property type="gene ID" value="WBGene00045419"/>
</dbReference>
<dbReference type="EnsemblMetazoa" id="R07B5.9d.1">
    <molecule id="K8ERR8-5"/>
    <property type="protein sequence ID" value="R07B5.9d.1"/>
    <property type="gene ID" value="WBGene00045419"/>
</dbReference>
<dbReference type="EnsemblMetazoa" id="R07B5.9f.1">
    <molecule id="K8ERR8-6"/>
    <property type="protein sequence ID" value="R07B5.9f.1"/>
    <property type="gene ID" value="WBGene00045419"/>
</dbReference>
<dbReference type="EnsemblMetazoa" id="R07B5.9g.1">
    <molecule id="K8ERR8-7"/>
    <property type="protein sequence ID" value="R07B5.9g.1"/>
    <property type="gene ID" value="WBGene00045419"/>
</dbReference>
<dbReference type="EnsemblMetazoa" id="R07B5.9h.1">
    <molecule id="K8ERR8-1"/>
    <property type="protein sequence ID" value="R07B5.9h.1"/>
    <property type="gene ID" value="WBGene00045419"/>
</dbReference>
<dbReference type="EnsemblMetazoa" id="R07B5.9i.1">
    <molecule id="K8ERR8-8"/>
    <property type="protein sequence ID" value="R07B5.9i.1"/>
    <property type="gene ID" value="WBGene00045419"/>
</dbReference>
<dbReference type="EnsemblMetazoa" id="R07B5.9j.1">
    <molecule id="K8ERR8-9"/>
    <property type="protein sequence ID" value="R07B5.9j.1"/>
    <property type="gene ID" value="WBGene00045419"/>
</dbReference>
<dbReference type="EnsemblMetazoa" id="R07B5.9j.2">
    <molecule id="K8ERR8-9"/>
    <property type="protein sequence ID" value="R07B5.9j.2"/>
    <property type="gene ID" value="WBGene00045419"/>
</dbReference>
<dbReference type="EnsemblMetazoa" id="R07B5.9k.1">
    <molecule id="K8ERR8-10"/>
    <property type="protein sequence ID" value="R07B5.9k.1"/>
    <property type="gene ID" value="WBGene00045419"/>
</dbReference>
<dbReference type="EnsemblMetazoa" id="R07B5.9k.2">
    <molecule id="K8ERR8-10"/>
    <property type="protein sequence ID" value="R07B5.9k.2"/>
    <property type="gene ID" value="WBGene00045419"/>
</dbReference>
<dbReference type="EnsemblMetazoa" id="R07B5.9k.3">
    <molecule id="K8ERR8-10"/>
    <property type="protein sequence ID" value="R07B5.9k.3"/>
    <property type="gene ID" value="WBGene00045419"/>
</dbReference>
<dbReference type="GeneID" id="3565873"/>
<dbReference type="KEGG" id="cel:CELE_R07B5.9"/>
<dbReference type="UCSC" id="R07B5.8b.1">
    <property type="organism name" value="c. elegans"/>
</dbReference>
<dbReference type="AGR" id="WB:WBGene00045419"/>
<dbReference type="CTD" id="3565873"/>
<dbReference type="WormBase" id="R07B5.9a">
    <molecule id="K8ERR8-2"/>
    <property type="protein sequence ID" value="CE45288"/>
    <property type="gene ID" value="WBGene00045419"/>
    <property type="gene designation" value="lsy-12"/>
</dbReference>
<dbReference type="WormBase" id="R07B5.9b">
    <molecule id="K8ERR8-3"/>
    <property type="protein sequence ID" value="CE37036"/>
    <property type="gene ID" value="WBGene00045419"/>
    <property type="gene designation" value="lsy-12"/>
</dbReference>
<dbReference type="WormBase" id="R07B5.9c">
    <molecule id="K8ERR8-4"/>
    <property type="protein sequence ID" value="CE45237"/>
    <property type="gene ID" value="WBGene00045419"/>
    <property type="gene designation" value="lsy-12"/>
</dbReference>
<dbReference type="WormBase" id="R07B5.9d">
    <molecule id="K8ERR8-5"/>
    <property type="protein sequence ID" value="CE45219"/>
    <property type="gene ID" value="WBGene00045419"/>
    <property type="gene designation" value="lsy-12"/>
</dbReference>
<dbReference type="WormBase" id="R07B5.9f">
    <molecule id="K8ERR8-6"/>
    <property type="protein sequence ID" value="CE46018"/>
    <property type="gene ID" value="WBGene00045419"/>
    <property type="gene designation" value="lsy-12"/>
</dbReference>
<dbReference type="WormBase" id="R07B5.9g">
    <molecule id="K8ERR8-7"/>
    <property type="protein sequence ID" value="CE47894"/>
    <property type="gene ID" value="WBGene00045419"/>
    <property type="gene designation" value="lsy-12"/>
</dbReference>
<dbReference type="WormBase" id="R07B5.9h">
    <molecule id="K8ERR8-1"/>
    <property type="protein sequence ID" value="CE47842"/>
    <property type="gene ID" value="WBGene00045419"/>
    <property type="gene designation" value="lsy-12"/>
</dbReference>
<dbReference type="WormBase" id="R07B5.9i">
    <molecule id="K8ERR8-8"/>
    <property type="protein sequence ID" value="CE48008"/>
    <property type="gene ID" value="WBGene00045419"/>
    <property type="gene designation" value="lsy-12"/>
</dbReference>
<dbReference type="WormBase" id="R07B5.9j">
    <molecule id="K8ERR8-9"/>
    <property type="protein sequence ID" value="CE48089"/>
    <property type="gene ID" value="WBGene00045419"/>
    <property type="gene designation" value="lsy-12"/>
</dbReference>
<dbReference type="WormBase" id="R07B5.9k">
    <molecule id="K8ERR8-10"/>
    <property type="protein sequence ID" value="CE48104"/>
    <property type="gene ID" value="WBGene00045419"/>
    <property type="gene designation" value="lsy-12"/>
</dbReference>
<dbReference type="eggNOG" id="KOG2747">
    <property type="taxonomic scope" value="Eukaryota"/>
</dbReference>
<dbReference type="GeneTree" id="ENSGT00940000157744"/>
<dbReference type="HOGENOM" id="CLU_003638_0_0_1"/>
<dbReference type="InParanoid" id="K8ERR8"/>
<dbReference type="OMA" id="AGANPYW"/>
<dbReference type="OrthoDB" id="5875435at2759"/>
<dbReference type="Reactome" id="R-CEL-3214847">
    <property type="pathway name" value="HATs acetylate histones"/>
</dbReference>
<dbReference type="PRO" id="PR:K8ERR8"/>
<dbReference type="Proteomes" id="UP000001940">
    <property type="component" value="Chromosome V"/>
</dbReference>
<dbReference type="Bgee" id="WBGene00045419">
    <property type="expression patterns" value="Expressed in embryo and 4 other cell types or tissues"/>
</dbReference>
<dbReference type="ExpressionAtlas" id="K8ERR8">
    <property type="expression patterns" value="baseline and differential"/>
</dbReference>
<dbReference type="GO" id="GO:0000785">
    <property type="term" value="C:chromatin"/>
    <property type="evidence" value="ECO:0000318"/>
    <property type="project" value="GO_Central"/>
</dbReference>
<dbReference type="GO" id="GO:0070776">
    <property type="term" value="C:MOZ/MORF histone acetyltransferase complex"/>
    <property type="evidence" value="ECO:0000318"/>
    <property type="project" value="GO_Central"/>
</dbReference>
<dbReference type="GO" id="GO:0005634">
    <property type="term" value="C:nucleus"/>
    <property type="evidence" value="ECO:0000318"/>
    <property type="project" value="GO_Central"/>
</dbReference>
<dbReference type="GO" id="GO:0003682">
    <property type="term" value="F:chromatin binding"/>
    <property type="evidence" value="ECO:0000318"/>
    <property type="project" value="GO_Central"/>
</dbReference>
<dbReference type="GO" id="GO:0010484">
    <property type="term" value="F:histone H3 acetyltransferase activity"/>
    <property type="evidence" value="ECO:0000318"/>
    <property type="project" value="GO_Central"/>
</dbReference>
<dbReference type="GO" id="GO:0003712">
    <property type="term" value="F:transcription coregulator activity"/>
    <property type="evidence" value="ECO:0000318"/>
    <property type="project" value="GO_Central"/>
</dbReference>
<dbReference type="GO" id="GO:0008270">
    <property type="term" value="F:zinc ion binding"/>
    <property type="evidence" value="ECO:0007669"/>
    <property type="project" value="UniProtKB-KW"/>
</dbReference>
<dbReference type="GO" id="GO:0001708">
    <property type="term" value="P:cell fate specification"/>
    <property type="evidence" value="ECO:0000315"/>
    <property type="project" value="UniProtKB"/>
</dbReference>
<dbReference type="GO" id="GO:0061968">
    <property type="term" value="P:maintenance of left/right asymmetry"/>
    <property type="evidence" value="ECO:0000315"/>
    <property type="project" value="UniProtKB"/>
</dbReference>
<dbReference type="GO" id="GO:0010628">
    <property type="term" value="P:positive regulation of gene expression"/>
    <property type="evidence" value="ECO:0000315"/>
    <property type="project" value="UniProtKB"/>
</dbReference>
<dbReference type="GO" id="GO:0006357">
    <property type="term" value="P:regulation of transcription by RNA polymerase II"/>
    <property type="evidence" value="ECO:0000318"/>
    <property type="project" value="GO_Central"/>
</dbReference>
<dbReference type="FunFam" id="3.30.60.60:FF:000007">
    <property type="entry name" value="Histone acetyltransferase"/>
    <property type="match status" value="1"/>
</dbReference>
<dbReference type="Gene3D" id="3.40.630.30">
    <property type="match status" value="1"/>
</dbReference>
<dbReference type="Gene3D" id="3.30.60.60">
    <property type="entry name" value="N-acetyl transferase-like"/>
    <property type="match status" value="1"/>
</dbReference>
<dbReference type="Gene3D" id="1.10.10.10">
    <property type="entry name" value="Winged helix-like DNA-binding domain superfamily/Winged helix DNA-binding domain"/>
    <property type="match status" value="1"/>
</dbReference>
<dbReference type="InterPro" id="IPR016181">
    <property type="entry name" value="Acyl_CoA_acyltransferase"/>
</dbReference>
<dbReference type="InterPro" id="IPR002717">
    <property type="entry name" value="HAT_MYST-type"/>
</dbReference>
<dbReference type="InterPro" id="IPR050603">
    <property type="entry name" value="MYST_HAT"/>
</dbReference>
<dbReference type="InterPro" id="IPR036388">
    <property type="entry name" value="WH-like_DNA-bd_sf"/>
</dbReference>
<dbReference type="InterPro" id="IPR040706">
    <property type="entry name" value="Zf-MYST"/>
</dbReference>
<dbReference type="PANTHER" id="PTHR10615">
    <property type="entry name" value="HISTONE ACETYLTRANSFERASE"/>
    <property type="match status" value="1"/>
</dbReference>
<dbReference type="PANTHER" id="PTHR10615:SF217">
    <property type="entry name" value="HISTONE ACETYLTRANSFERASE"/>
    <property type="match status" value="1"/>
</dbReference>
<dbReference type="Pfam" id="PF01853">
    <property type="entry name" value="MOZ_SAS"/>
    <property type="match status" value="1"/>
</dbReference>
<dbReference type="Pfam" id="PF17772">
    <property type="entry name" value="zf-MYST"/>
    <property type="match status" value="1"/>
</dbReference>
<dbReference type="SUPFAM" id="SSF55729">
    <property type="entry name" value="Acyl-CoA N-acyltransferases (Nat)"/>
    <property type="match status" value="1"/>
</dbReference>
<dbReference type="PROSITE" id="PS51726">
    <property type="entry name" value="MYST_HAT"/>
    <property type="match status" value="1"/>
</dbReference>
<comment type="function">
    <text evidence="4 7">Probable histone acetyltransferase (Probable). Required to initiate and then maintain lateralized gene expression in the ASE sensory neurons (PubMed:20923973). Involved in determining cell fate in the ASE neurons (PubMed:20923973).</text>
</comment>
<comment type="catalytic activity">
    <reaction evidence="2">
        <text>L-lysyl-[protein] + acetyl-CoA = N(6)-acetyl-L-lysyl-[protein] + CoA + H(+)</text>
        <dbReference type="Rhea" id="RHEA:45948"/>
        <dbReference type="Rhea" id="RHEA-COMP:9752"/>
        <dbReference type="Rhea" id="RHEA-COMP:10731"/>
        <dbReference type="ChEBI" id="CHEBI:15378"/>
        <dbReference type="ChEBI" id="CHEBI:29969"/>
        <dbReference type="ChEBI" id="CHEBI:57287"/>
        <dbReference type="ChEBI" id="CHEBI:57288"/>
        <dbReference type="ChEBI" id="CHEBI:61930"/>
        <dbReference type="EC" id="2.3.1.48"/>
    </reaction>
</comment>
<comment type="alternative products">
    <event type="alternative splicing"/>
    <isoform>
        <id>K8ERR8-1</id>
        <name evidence="15">h</name>
        <sequence type="displayed"/>
    </isoform>
    <isoform>
        <id>K8ERR8-2</id>
        <name evidence="9">a</name>
        <sequence type="described" ref="VSP_061552 VSP_061560"/>
    </isoform>
    <isoform>
        <id>K8ERR8-3</id>
        <name evidence="10">b</name>
        <sequence type="described" ref="VSP_061553 VSP_061558 VSP_061559"/>
    </isoform>
    <isoform>
        <id>K8ERR8-4</id>
        <name evidence="11">c</name>
        <sequence type="described" ref="VSP_061555 VSP_061560"/>
    </isoform>
    <isoform>
        <id>K8ERR8-5</id>
        <name evidence="12">d</name>
        <sequence type="described" ref="VSP_061554 VSP_061555 VSP_061560"/>
    </isoform>
    <isoform>
        <id>K8ERR8-6</id>
        <name evidence="13">f</name>
        <sequence type="described" ref="VSP_061560"/>
    </isoform>
    <isoform>
        <id>K8ERR8-7</id>
        <name evidence="14">g</name>
        <sequence type="described" ref="VSP_061555"/>
    </isoform>
    <isoform>
        <id>K8ERR8-8</id>
        <name evidence="16">i</name>
        <sequence type="described" ref="VSP_061554 VSP_061555"/>
    </isoform>
    <isoform>
        <id>K8ERR8-9</id>
        <name evidence="17">j</name>
        <sequence type="described" ref="VSP_061553"/>
    </isoform>
    <isoform>
        <id>K8ERR8-10</id>
        <name evidence="18">k</name>
        <sequence type="described" ref="VSP_061553 VSP_061556 VSP_061557"/>
    </isoform>
</comment>
<comment type="similarity">
    <text evidence="6">Belongs to the MYST (SAS/MOZ) family.</text>
</comment>
<name>LSY12_CAEEL</name>
<organism evidence="8">
    <name type="scientific">Caenorhabditis elegans</name>
    <dbReference type="NCBI Taxonomy" id="6239"/>
    <lineage>
        <taxon>Eukaryota</taxon>
        <taxon>Metazoa</taxon>
        <taxon>Ecdysozoa</taxon>
        <taxon>Nematoda</taxon>
        <taxon>Chromadorea</taxon>
        <taxon>Rhabditida</taxon>
        <taxon>Rhabditina</taxon>
        <taxon>Rhabditomorpha</taxon>
        <taxon>Rhabditoidea</taxon>
        <taxon>Rhabditidae</taxon>
        <taxon>Peloderinae</taxon>
        <taxon>Caenorhabditis</taxon>
    </lineage>
</organism>
<protein>
    <recommendedName>
        <fullName evidence="5">Histone acetyltransferase lsy-12</fullName>
        <ecNumber evidence="2">2.3.1.48</ecNumber>
    </recommendedName>
</protein>
<reference evidence="8" key="1">
    <citation type="journal article" date="1998" name="Science">
        <title>Genome sequence of the nematode C. elegans: a platform for investigating biology.</title>
        <authorList>
            <consortium name="The C. elegans sequencing consortium"/>
        </authorList>
    </citation>
    <scope>NUCLEOTIDE SEQUENCE [LARGE SCALE GENOMIC DNA]</scope>
    <source>
        <strain evidence="8">Bristol N2</strain>
    </source>
</reference>
<reference evidence="6" key="2">
    <citation type="journal article" date="2010" name="Genetics">
        <title>Maintenance of neuronal laterality in Caenorhabditis elegans through MYST histone acetyltransferase complex components LSY-12, LSY-13 and LIN-49.</title>
        <authorList>
            <person name="O'Meara M.M."/>
            <person name="Zhang F."/>
            <person name="Hobert O."/>
        </authorList>
    </citation>
    <scope>FUNCTION</scope>
    <scope>MUTAGENESIS OF 1539-GLN--ARG-1585</scope>
</reference>
<feature type="chain" id="PRO_0000456039" description="Histone acetyltransferase lsy-12">
    <location>
        <begin position="1"/>
        <end position="1585"/>
    </location>
</feature>
<feature type="domain" description="MYST-type HAT" evidence="2">
    <location>
        <begin position="544"/>
        <end position="830"/>
    </location>
</feature>
<feature type="zinc finger region" description="C2HC MYST-type" evidence="2">
    <location>
        <begin position="577"/>
        <end position="602"/>
    </location>
</feature>
<feature type="region of interest" description="Disordered" evidence="3">
    <location>
        <begin position="1"/>
        <end position="37"/>
    </location>
</feature>
<feature type="region of interest" description="Disordered" evidence="3">
    <location>
        <begin position="279"/>
        <end position="491"/>
    </location>
</feature>
<feature type="region of interest" description="Disordered" evidence="3">
    <location>
        <begin position="844"/>
        <end position="903"/>
    </location>
</feature>
<feature type="region of interest" description="Disordered" evidence="3">
    <location>
        <begin position="927"/>
        <end position="1262"/>
    </location>
</feature>
<feature type="region of interest" description="Disordered" evidence="3">
    <location>
        <begin position="1286"/>
        <end position="1373"/>
    </location>
</feature>
<feature type="region of interest" description="Disordered" evidence="3">
    <location>
        <begin position="1431"/>
        <end position="1507"/>
    </location>
</feature>
<feature type="compositionally biased region" description="Basic and acidic residues" evidence="3">
    <location>
        <begin position="23"/>
        <end position="37"/>
    </location>
</feature>
<feature type="compositionally biased region" description="Polar residues" evidence="3">
    <location>
        <begin position="279"/>
        <end position="296"/>
    </location>
</feature>
<feature type="compositionally biased region" description="Basic and acidic residues" evidence="3">
    <location>
        <begin position="302"/>
        <end position="312"/>
    </location>
</feature>
<feature type="compositionally biased region" description="Polar residues" evidence="3">
    <location>
        <begin position="355"/>
        <end position="364"/>
    </location>
</feature>
<feature type="compositionally biased region" description="Polar residues" evidence="3">
    <location>
        <begin position="411"/>
        <end position="426"/>
    </location>
</feature>
<feature type="compositionally biased region" description="Low complexity" evidence="3">
    <location>
        <begin position="431"/>
        <end position="440"/>
    </location>
</feature>
<feature type="compositionally biased region" description="Basic residues" evidence="3">
    <location>
        <begin position="453"/>
        <end position="469"/>
    </location>
</feature>
<feature type="compositionally biased region" description="Acidic residues" evidence="3">
    <location>
        <begin position="477"/>
        <end position="491"/>
    </location>
</feature>
<feature type="compositionally biased region" description="Basic and acidic residues" evidence="3">
    <location>
        <begin position="844"/>
        <end position="855"/>
    </location>
</feature>
<feature type="compositionally biased region" description="Basic and acidic residues" evidence="3">
    <location>
        <begin position="947"/>
        <end position="956"/>
    </location>
</feature>
<feature type="compositionally biased region" description="Polar residues" evidence="3">
    <location>
        <begin position="977"/>
        <end position="999"/>
    </location>
</feature>
<feature type="compositionally biased region" description="Acidic residues" evidence="3">
    <location>
        <begin position="1011"/>
        <end position="1022"/>
    </location>
</feature>
<feature type="compositionally biased region" description="Basic and acidic residues" evidence="3">
    <location>
        <begin position="1029"/>
        <end position="1046"/>
    </location>
</feature>
<feature type="compositionally biased region" description="Basic residues" evidence="3">
    <location>
        <begin position="1047"/>
        <end position="1060"/>
    </location>
</feature>
<feature type="compositionally biased region" description="Basic and acidic residues" evidence="3">
    <location>
        <begin position="1070"/>
        <end position="1081"/>
    </location>
</feature>
<feature type="compositionally biased region" description="Basic and acidic residues" evidence="3">
    <location>
        <begin position="1135"/>
        <end position="1151"/>
    </location>
</feature>
<feature type="compositionally biased region" description="Low complexity" evidence="3">
    <location>
        <begin position="1164"/>
        <end position="1173"/>
    </location>
</feature>
<feature type="compositionally biased region" description="Polar residues" evidence="3">
    <location>
        <begin position="1185"/>
        <end position="1194"/>
    </location>
</feature>
<feature type="compositionally biased region" description="Basic and acidic residues" evidence="3">
    <location>
        <begin position="1196"/>
        <end position="1207"/>
    </location>
</feature>
<feature type="compositionally biased region" description="Polar residues" evidence="3">
    <location>
        <begin position="1298"/>
        <end position="1317"/>
    </location>
</feature>
<feature type="compositionally biased region" description="Polar residues" evidence="3">
    <location>
        <begin position="1324"/>
        <end position="1333"/>
    </location>
</feature>
<feature type="compositionally biased region" description="Low complexity" evidence="3">
    <location>
        <begin position="1482"/>
        <end position="1493"/>
    </location>
</feature>
<feature type="active site" description="Proton donor/acceptor" evidence="1 2">
    <location>
        <position position="720"/>
    </location>
</feature>
<feature type="binding site" evidence="2">
    <location>
        <begin position="685"/>
        <end position="689"/>
    </location>
    <ligand>
        <name>acetyl-CoA</name>
        <dbReference type="ChEBI" id="CHEBI:57288"/>
    </ligand>
</feature>
<feature type="binding site" evidence="2">
    <location>
        <position position="724"/>
    </location>
    <ligand>
        <name>acetyl-CoA</name>
        <dbReference type="ChEBI" id="CHEBI:57288"/>
    </ligand>
</feature>
<feature type="binding site" evidence="2">
    <location>
        <position position="815"/>
    </location>
    <ligand>
        <name>acetyl-CoA</name>
        <dbReference type="ChEBI" id="CHEBI:57288"/>
    </ligand>
</feature>
<feature type="modified residue" description="N6-acetyllysine; by autocatalysis" evidence="2">
    <location>
        <position position="644"/>
    </location>
</feature>
<feature type="splice variant" id="VSP_061552" description="In isoform a." evidence="6">
    <original>MGKKRKPSPERSSDEDEVSTPSPKDRTARPTAAARRENVALSQAVALSLEDASNFCSLAFSLERIKREPVDTDYDDPNQPGPSSVPVSARTDHVLPIRFKIKAEPQEYDSDEYGKDHGAVQIANKEVPAISPIEEVSQKRRGRPRKTDAAQHLFFPHVSIKQEPDDGFINFHESRCVGIAQDPEMQHLHDVNESHSSEIAIFRETKKITERKKKKTEAEKLWDNMSLTEKEVFQSHTRRRRTTRLPIIQNFEETEEGCIVEVPIPLIDLDNDAVESVTGPQHENVTVSENVLSTESTDQEVTETKRLHDSSRDFNPPRIQDTPSTVIRPEGDQKDPMSSTSSKRRNTNNSRCASLLSNP</original>
    <variation>MSSTSSKRRNTNNSRCASLLSNP</variation>
    <location>
        <begin position="1"/>
        <end position="359"/>
    </location>
</feature>
<feature type="splice variant" id="VSP_061553" description="In isoform b, isoform j and isoform k." evidence="6">
    <location>
        <begin position="1"/>
        <end position="336"/>
    </location>
</feature>
<feature type="splice variant" id="VSP_061554" description="In isoform d and isoform i." evidence="6">
    <original>MGKKRKPSPERSSDEDEVSTPSPKDRTARPTAAARRENVALSQAVALSLEDASNFCSLAFSLERIKREPVDTDYDDPNQPGPSSVPVSARTDHVLPIRFKIKAEPQEYDSDEYGKDHGAVQIANKEVPAISPIEEVSQKRRGRPRKTDAAQHLFFPHVSIKQEPDDGFINFHESRCVGIAQDPEMQHLHDVNESHSSEIAIFRETKKITERKKKKTEAEKLWDNMSLTEKEVFQSHTRRRRTTRLPIIQNFEETEEGCIVEVPIPLIDLDNDAVESVTGPQHENVTVSENVLSTESTDQEVT</original>
    <variation>MFLSIETGYQHLQKLVFN</variation>
    <location>
        <begin position="1"/>
        <end position="302"/>
    </location>
</feature>
<feature type="splice variant" id="VSP_061555" description="In isoform c, isoform d, isoform g and isoform i." evidence="6">
    <location>
        <begin position="337"/>
        <end position="381"/>
    </location>
</feature>
<feature type="splice variant" id="VSP_061556" description="In isoform k." evidence="6">
    <original>WVPRKMRPSMDGYHELSKEEIEQ</original>
    <variation>FSVGSSKNATINGRLSRAFKRGD</variation>
    <location>
        <begin position="828"/>
        <end position="850"/>
    </location>
</feature>
<feature type="splice variant" id="VSP_061557" description="In isoform k." evidence="6">
    <location>
        <begin position="851"/>
        <end position="1585"/>
    </location>
</feature>
<feature type="splice variant" id="VSP_061558" description="In isoform b." evidence="6">
    <original>ELRSRGHNRSVGRNLKHEV</original>
    <variation>VRKRRFQFGMKHRKRNNTC</variation>
    <location>
        <begin position="886"/>
        <end position="904"/>
    </location>
</feature>
<feature type="splice variant" id="VSP_061559" description="In isoform b." evidence="6">
    <location>
        <begin position="905"/>
        <end position="1585"/>
    </location>
</feature>
<feature type="splice variant" id="VSP_061560" description="In isoform a, isoform c, isoform d and isoform f." evidence="6">
    <location>
        <begin position="1405"/>
        <end position="1407"/>
    </location>
</feature>
<feature type="mutagenesis site" description="In ot154; Reduces expression of lim-6 in the sensory ASEL neuron; exacerbated in a lin-49 mutant background." evidence="4">
    <location>
        <begin position="1539"/>
        <end position="1585"/>
    </location>
</feature>
<proteinExistence type="evidence at protein level"/>
<gene>
    <name evidence="15" type="primary">lsy-12</name>
    <name evidence="15" type="synonym">mys-3</name>
    <name evidence="15" type="ORF">R07B5.9</name>
</gene>
<evidence type="ECO:0000255" key="1">
    <source>
        <dbReference type="PIRSR" id="PIRSR602717-51"/>
    </source>
</evidence>
<evidence type="ECO:0000255" key="2">
    <source>
        <dbReference type="PROSITE-ProRule" id="PRU01063"/>
    </source>
</evidence>
<evidence type="ECO:0000256" key="3">
    <source>
        <dbReference type="SAM" id="MobiDB-lite"/>
    </source>
</evidence>
<evidence type="ECO:0000269" key="4">
    <source>
    </source>
</evidence>
<evidence type="ECO:0000303" key="5">
    <source>
    </source>
</evidence>
<evidence type="ECO:0000305" key="6"/>
<evidence type="ECO:0000305" key="7">
    <source>
    </source>
</evidence>
<evidence type="ECO:0000312" key="8">
    <source>
        <dbReference type="Proteomes" id="UP000001940"/>
    </source>
</evidence>
<evidence type="ECO:0000312" key="9">
    <source>
        <dbReference type="WormBase" id="R07B5.9a"/>
    </source>
</evidence>
<evidence type="ECO:0000312" key="10">
    <source>
        <dbReference type="WormBase" id="R07B5.9b"/>
    </source>
</evidence>
<evidence type="ECO:0000312" key="11">
    <source>
        <dbReference type="WormBase" id="R07B5.9c"/>
    </source>
</evidence>
<evidence type="ECO:0000312" key="12">
    <source>
        <dbReference type="WormBase" id="R07B5.9d"/>
    </source>
</evidence>
<evidence type="ECO:0000312" key="13">
    <source>
        <dbReference type="WormBase" id="R07B5.9f"/>
    </source>
</evidence>
<evidence type="ECO:0000312" key="14">
    <source>
        <dbReference type="WormBase" id="R07B5.9g"/>
    </source>
</evidence>
<evidence type="ECO:0000312" key="15">
    <source>
        <dbReference type="WormBase" id="R07B5.9h"/>
    </source>
</evidence>
<evidence type="ECO:0000312" key="16">
    <source>
        <dbReference type="WormBase" id="R07B5.9i"/>
    </source>
</evidence>
<evidence type="ECO:0000312" key="17">
    <source>
        <dbReference type="WormBase" id="R07B5.9j"/>
    </source>
</evidence>
<evidence type="ECO:0000312" key="18">
    <source>
        <dbReference type="WormBase" id="R07B5.9k"/>
    </source>
</evidence>